<proteinExistence type="inferred from homology"/>
<gene>
    <name type="ordered locus">Mbar_A0619</name>
</gene>
<accession>Q46EU3</accession>
<name>Y619_METBF</name>
<evidence type="ECO:0000255" key="1">
    <source>
        <dbReference type="HAMAP-Rule" id="MF_00582"/>
    </source>
</evidence>
<sequence length="194" mass="21791">MNIDFHIKPEIRILGIDDSALLNEKVMIVGAVFRGGDWIDGVLRSEITKDGLDATEVICNMIKKSKHYDQIRTVILDGITYGGFNVVDIQMLYRETGIPVIVVMRSYPDFEKIKSALKYFPDGEERWTIIKRAGKIERIPGEKSPIYIQRAGIGVETVKKIIRLTSIRSNIPEPLRVAHLIATGIILGESRGKA</sequence>
<dbReference type="EMBL" id="CP000099">
    <property type="protein sequence ID" value="AAZ69599.1"/>
    <property type="molecule type" value="Genomic_DNA"/>
</dbReference>
<dbReference type="SMR" id="Q46EU3"/>
<dbReference type="STRING" id="269797.Mbar_A0619"/>
<dbReference type="PaxDb" id="269797-Mbar_A0619"/>
<dbReference type="KEGG" id="mba:Mbar_A0619"/>
<dbReference type="eggNOG" id="arCOG00928">
    <property type="taxonomic scope" value="Archaea"/>
</dbReference>
<dbReference type="HOGENOM" id="CLU_095956_1_0_2"/>
<dbReference type="OrthoDB" id="15207at2157"/>
<dbReference type="Gene3D" id="3.30.2170.10">
    <property type="entry name" value="archaeoglobus fulgidus dsm 4304 superfamily"/>
    <property type="match status" value="1"/>
</dbReference>
<dbReference type="HAMAP" id="MF_00582">
    <property type="entry name" value="UPF0215"/>
    <property type="match status" value="1"/>
</dbReference>
<dbReference type="InterPro" id="IPR002802">
    <property type="entry name" value="Endo_dU"/>
</dbReference>
<dbReference type="NCBIfam" id="NF001977">
    <property type="entry name" value="PRK00766.1"/>
    <property type="match status" value="1"/>
</dbReference>
<dbReference type="PANTHER" id="PTHR39518">
    <property type="entry name" value="UPF0215 PROTEIN MJ1150"/>
    <property type="match status" value="1"/>
</dbReference>
<dbReference type="PANTHER" id="PTHR39518:SF2">
    <property type="entry name" value="UPF0215 PROTEIN MJ1150"/>
    <property type="match status" value="1"/>
</dbReference>
<dbReference type="Pfam" id="PF01949">
    <property type="entry name" value="DUF99"/>
    <property type="match status" value="1"/>
</dbReference>
<dbReference type="PIRSF" id="PIRSF006380">
    <property type="entry name" value="UCP006380"/>
    <property type="match status" value="1"/>
</dbReference>
<reference key="1">
    <citation type="journal article" date="2006" name="J. Bacteriol.">
        <title>The Methanosarcina barkeri genome: comparative analysis with Methanosarcina acetivorans and Methanosarcina mazei reveals extensive rearrangement within methanosarcinal genomes.</title>
        <authorList>
            <person name="Maeder D.L."/>
            <person name="Anderson I."/>
            <person name="Brettin T.S."/>
            <person name="Bruce D.C."/>
            <person name="Gilna P."/>
            <person name="Han C.S."/>
            <person name="Lapidus A."/>
            <person name="Metcalf W.W."/>
            <person name="Saunders E."/>
            <person name="Tapia R."/>
            <person name="Sowers K.R."/>
        </authorList>
    </citation>
    <scope>NUCLEOTIDE SEQUENCE [LARGE SCALE GENOMIC DNA]</scope>
    <source>
        <strain>Fusaro / DSM 804</strain>
    </source>
</reference>
<feature type="chain" id="PRO_1000025449" description="UPF0215 protein Mbar_A0619">
    <location>
        <begin position="1"/>
        <end position="194"/>
    </location>
</feature>
<organism>
    <name type="scientific">Methanosarcina barkeri (strain Fusaro / DSM 804)</name>
    <dbReference type="NCBI Taxonomy" id="269797"/>
    <lineage>
        <taxon>Archaea</taxon>
        <taxon>Methanobacteriati</taxon>
        <taxon>Methanobacteriota</taxon>
        <taxon>Stenosarchaea group</taxon>
        <taxon>Methanomicrobia</taxon>
        <taxon>Methanosarcinales</taxon>
        <taxon>Methanosarcinaceae</taxon>
        <taxon>Methanosarcina</taxon>
    </lineage>
</organism>
<protein>
    <recommendedName>
        <fullName evidence="1">UPF0215 protein Mbar_A0619</fullName>
    </recommendedName>
</protein>
<comment type="similarity">
    <text evidence="1">Belongs to the UPF0215 family.</text>
</comment>